<dbReference type="EC" id="3.1.1.111" evidence="2"/>
<dbReference type="EMBL" id="BC083664">
    <property type="protein sequence ID" value="AAH83664.1"/>
    <property type="molecule type" value="mRNA"/>
</dbReference>
<dbReference type="RefSeq" id="NP_001014074.1">
    <property type="nucleotide sequence ID" value="NM_001014052.2"/>
</dbReference>
<dbReference type="SMR" id="Q5XIL6"/>
<dbReference type="FunCoup" id="Q5XIL6">
    <property type="interactions" value="116"/>
</dbReference>
<dbReference type="STRING" id="10116.ENSRNOP00000020210"/>
<dbReference type="ESTHER" id="ratno-q5xil6">
    <property type="family name" value="ABHD16"/>
</dbReference>
<dbReference type="PhosphoSitePlus" id="Q5XIL6"/>
<dbReference type="PaxDb" id="10116-ENSRNOP00000020210"/>
<dbReference type="Ensembl" id="ENSRNOT00000020210.6">
    <property type="protein sequence ID" value="ENSRNOP00000020210.4"/>
    <property type="gene ID" value="ENSRNOG00000015067.6"/>
</dbReference>
<dbReference type="Ensembl" id="ENSRNOT00000100247.1">
    <property type="protein sequence ID" value="ENSRNOP00000082032.1"/>
    <property type="gene ID" value="ENSRNOG00000015067.6"/>
</dbReference>
<dbReference type="Ensembl" id="ENSRNOT00000114404.1">
    <property type="protein sequence ID" value="ENSRNOP00000084244.1"/>
    <property type="gene ID" value="ENSRNOG00000015067.6"/>
</dbReference>
<dbReference type="Ensembl" id="ENSRNOT00000114740.1">
    <property type="protein sequence ID" value="ENSRNOP00000080130.1"/>
    <property type="gene ID" value="ENSRNOG00000015067.6"/>
</dbReference>
<dbReference type="GeneID" id="311720"/>
<dbReference type="KEGG" id="rno:311720"/>
<dbReference type="UCSC" id="RGD:1309726">
    <property type="organism name" value="rat"/>
</dbReference>
<dbReference type="AGR" id="RGD:1309726"/>
<dbReference type="CTD" id="140701"/>
<dbReference type="RGD" id="1309726">
    <property type="gene designation" value="Abhd16b"/>
</dbReference>
<dbReference type="eggNOG" id="KOG1553">
    <property type="taxonomic scope" value="Eukaryota"/>
</dbReference>
<dbReference type="GeneTree" id="ENSGT00940000162803"/>
<dbReference type="HOGENOM" id="CLU_040705_2_0_1"/>
<dbReference type="InParanoid" id="Q5XIL6"/>
<dbReference type="OMA" id="GHRALTC"/>
<dbReference type="OrthoDB" id="6412627at2759"/>
<dbReference type="PhylomeDB" id="Q5XIL6"/>
<dbReference type="TreeFam" id="TF314267"/>
<dbReference type="PRO" id="PR:Q5XIL6"/>
<dbReference type="Proteomes" id="UP000002494">
    <property type="component" value="Chromosome 3"/>
</dbReference>
<dbReference type="Bgee" id="ENSRNOG00000015067">
    <property type="expression patterns" value="Expressed in testis"/>
</dbReference>
<dbReference type="GO" id="GO:0005654">
    <property type="term" value="C:nucleoplasm"/>
    <property type="evidence" value="ECO:0007669"/>
    <property type="project" value="Ensembl"/>
</dbReference>
<dbReference type="GO" id="GO:0047372">
    <property type="term" value="F:monoacylglycerol lipase activity"/>
    <property type="evidence" value="ECO:0000318"/>
    <property type="project" value="GO_Central"/>
</dbReference>
<dbReference type="GO" id="GO:0004620">
    <property type="term" value="F:phospholipase activity"/>
    <property type="evidence" value="ECO:0000318"/>
    <property type="project" value="GO_Central"/>
</dbReference>
<dbReference type="GO" id="GO:0052651">
    <property type="term" value="P:monoacylglycerol catabolic process"/>
    <property type="evidence" value="ECO:0000318"/>
    <property type="project" value="GO_Central"/>
</dbReference>
<dbReference type="GO" id="GO:0006660">
    <property type="term" value="P:phosphatidylserine catabolic process"/>
    <property type="evidence" value="ECO:0000318"/>
    <property type="project" value="GO_Central"/>
</dbReference>
<dbReference type="FunFam" id="3.40.50.1820:FF:000074">
    <property type="entry name" value="Abhydrolase domain containing 16A"/>
    <property type="match status" value="1"/>
</dbReference>
<dbReference type="Gene3D" id="3.40.50.1820">
    <property type="entry name" value="alpha/beta hydrolase"/>
    <property type="match status" value="1"/>
</dbReference>
<dbReference type="InterPro" id="IPR000073">
    <property type="entry name" value="AB_hydrolase_1"/>
</dbReference>
<dbReference type="InterPro" id="IPR029058">
    <property type="entry name" value="AB_hydrolase_fold"/>
</dbReference>
<dbReference type="PANTHER" id="PTHR12277">
    <property type="entry name" value="ALPHA/BETA HYDROLASE DOMAIN-CONTAINING PROTEIN"/>
    <property type="match status" value="1"/>
</dbReference>
<dbReference type="PANTHER" id="PTHR12277:SF37">
    <property type="entry name" value="PROTEIN ABHD16B"/>
    <property type="match status" value="1"/>
</dbReference>
<dbReference type="Pfam" id="PF00561">
    <property type="entry name" value="Abhydrolase_1"/>
    <property type="match status" value="1"/>
</dbReference>
<dbReference type="SUPFAM" id="SSF53474">
    <property type="entry name" value="alpha/beta-Hydrolases"/>
    <property type="match status" value="1"/>
</dbReference>
<gene>
    <name evidence="5" type="primary">Abhd16b</name>
</gene>
<protein>
    <recommendedName>
        <fullName evidence="2">ABHD16B</fullName>
        <ecNumber evidence="2">3.1.1.111</ecNumber>
    </recommendedName>
    <alternativeName>
        <fullName evidence="4">Alpha/beta hydrolase domain-containing protein 16B</fullName>
        <shortName evidence="5">Abhydrolase domain-containing protein 16B</shortName>
    </alternativeName>
</protein>
<keyword id="KW-0378">Hydrolase</keyword>
<keyword id="KW-0443">Lipid metabolism</keyword>
<keyword id="KW-1208">Phospholipid metabolism</keyword>
<keyword id="KW-1185">Reference proteome</keyword>
<comment type="function">
    <text evidence="2">Hydrolyzes the sn-1 position of glycerophospholipids with high specificity towards phosphatidylserine (PS), PS-PLA1 enzyme. Also hydrolyzes the acyl chain of glycerolipids with a preference for the monoacylglycerol (MAG) 1-acylglycerol, MAG lipase. Plays a regulatory role in cellular lipid homeostasis by modulating genes involved in neutral lipid degradation and in phospholipid synthesis and composition.</text>
</comment>
<comment type="catalytic activity">
    <reaction evidence="2">
        <text>a 1,2-diacyl-sn-glycero-3-phospho-L-serine + H2O = a 2-acyl-sn-glycero-3-phospho-L-serine + a fatty acid + H(+)</text>
        <dbReference type="Rhea" id="RHEA:42212"/>
        <dbReference type="ChEBI" id="CHEBI:15377"/>
        <dbReference type="ChEBI" id="CHEBI:15378"/>
        <dbReference type="ChEBI" id="CHEBI:28868"/>
        <dbReference type="ChEBI" id="CHEBI:57262"/>
        <dbReference type="ChEBI" id="CHEBI:65214"/>
        <dbReference type="EC" id="3.1.1.111"/>
    </reaction>
    <physiologicalReaction direction="left-to-right" evidence="2">
        <dbReference type="Rhea" id="RHEA:42213"/>
    </physiologicalReaction>
</comment>
<comment type="catalytic activity">
    <reaction evidence="2">
        <text>a 1-acylglycerol + H2O = glycerol + a fatty acid + H(+)</text>
        <dbReference type="Rhea" id="RHEA:34019"/>
        <dbReference type="ChEBI" id="CHEBI:15377"/>
        <dbReference type="ChEBI" id="CHEBI:15378"/>
        <dbReference type="ChEBI" id="CHEBI:17754"/>
        <dbReference type="ChEBI" id="CHEBI:28868"/>
        <dbReference type="ChEBI" id="CHEBI:35759"/>
    </reaction>
    <physiologicalReaction direction="left-to-right" evidence="2">
        <dbReference type="Rhea" id="RHEA:34020"/>
    </physiologicalReaction>
</comment>
<comment type="catalytic activity">
    <reaction evidence="2">
        <text>1-(9Z-octadecenoyl)-glycerol + H2O = glycerol + (9Z)-octadecenoate + H(+)</text>
        <dbReference type="Rhea" id="RHEA:38487"/>
        <dbReference type="ChEBI" id="CHEBI:15377"/>
        <dbReference type="ChEBI" id="CHEBI:15378"/>
        <dbReference type="ChEBI" id="CHEBI:17754"/>
        <dbReference type="ChEBI" id="CHEBI:30823"/>
        <dbReference type="ChEBI" id="CHEBI:75342"/>
    </reaction>
    <physiologicalReaction direction="left-to-right" evidence="2">
        <dbReference type="Rhea" id="RHEA:38488"/>
    </physiologicalReaction>
</comment>
<comment type="similarity">
    <text evidence="4">Belongs to the AB hydrolase superfamily. ABHD16 family.</text>
</comment>
<name>ABHGB_RAT</name>
<reference key="1">
    <citation type="journal article" date="2004" name="Genome Res.">
        <title>The status, quality, and expansion of the NIH full-length cDNA project: the Mammalian Gene Collection (MGC).</title>
        <authorList>
            <consortium name="The MGC Project Team"/>
        </authorList>
    </citation>
    <scope>NUCLEOTIDE SEQUENCE [LARGE SCALE MRNA]</scope>
    <source>
        <tissue>Testis</tissue>
    </source>
</reference>
<sequence length="474" mass="53294">MCVICFVKALVHVFKIYLTANYSYNFRSWPVDFRWDDLHVPGTNNSSHRALTCAAAAAGVWLLHDAALGEDALTRPPRGARSQVQCLLQQIRELPSQLASYALAHSLGRWLVYPGSMFLMTRALLPLLQQGQERLVDRYRGRRAKLVACDGNEIDTMFMDRRQHPGSHGRGLCLVICCEGNAGFYEMGCLSAPLEAGYSVLGWNHPGFGGSTGAPFPQHDANAMDVVVKYALHRLHFSPANVVVYGWSIGGFTATWATMTYPELGALVLDATFDDLVPLALKVMPQSWKGLVVRTVREHFNLNVAEQLCCYPGPVLLLRRTQDDVVSTSGHVPSLPSCQVEGDVEGNRGNELLLRLLEHRYPSVMAREGRTVVIRWLRASNLAQETALYARYHVDDEWCLATLRSYREGRQKDLDHTKTWGPHGPSFPWFVGQGLSARRRRHLALFLARRHLKNLEATHCSPLEPEDFQLPWRL</sequence>
<organism>
    <name type="scientific">Rattus norvegicus</name>
    <name type="common">Rat</name>
    <dbReference type="NCBI Taxonomy" id="10116"/>
    <lineage>
        <taxon>Eukaryota</taxon>
        <taxon>Metazoa</taxon>
        <taxon>Chordata</taxon>
        <taxon>Craniata</taxon>
        <taxon>Vertebrata</taxon>
        <taxon>Euteleostomi</taxon>
        <taxon>Mammalia</taxon>
        <taxon>Eutheria</taxon>
        <taxon>Euarchontoglires</taxon>
        <taxon>Glires</taxon>
        <taxon>Rodentia</taxon>
        <taxon>Myomorpha</taxon>
        <taxon>Muroidea</taxon>
        <taxon>Muridae</taxon>
        <taxon>Murinae</taxon>
        <taxon>Rattus</taxon>
    </lineage>
</organism>
<accession>Q5XIL6</accession>
<proteinExistence type="evidence at transcript level"/>
<feature type="chain" id="PRO_0000079465" description="ABHD16B">
    <location>
        <begin position="1"/>
        <end position="474"/>
    </location>
</feature>
<feature type="domain" description="AB hydrolase-1" evidence="3">
    <location>
        <begin position="175"/>
        <end position="293"/>
    </location>
</feature>
<feature type="active site" description="Charge relay system" evidence="1">
    <location>
        <position position="248"/>
    </location>
</feature>
<feature type="active site" description="Charge relay system" evidence="1">
    <location>
        <position position="323"/>
    </location>
</feature>
<feature type="active site" description="Charge relay system" evidence="1">
    <location>
        <position position="423"/>
    </location>
</feature>
<evidence type="ECO:0000250" key="1"/>
<evidence type="ECO:0000250" key="2">
    <source>
        <dbReference type="UniProtKB" id="Q9H3Z7"/>
    </source>
</evidence>
<evidence type="ECO:0000255" key="3"/>
<evidence type="ECO:0000305" key="4"/>
<evidence type="ECO:0000312" key="5">
    <source>
        <dbReference type="RGD" id="1309726"/>
    </source>
</evidence>